<feature type="chain" id="PRO_0000290583" description="Transcription factor E2F6">
    <location>
        <begin position="1"/>
        <end position="285"/>
    </location>
</feature>
<feature type="DNA-binding region" evidence="4">
    <location>
        <begin position="50"/>
        <end position="129"/>
    </location>
</feature>
<feature type="region of interest" description="Dimerization" evidence="4">
    <location>
        <begin position="130"/>
        <end position="222"/>
    </location>
</feature>
<feature type="region of interest" description="Leucine-zipper">
    <location>
        <begin position="143"/>
        <end position="164"/>
    </location>
</feature>
<feature type="region of interest" description="Transcription repression" evidence="1">
    <location>
        <begin position="173"/>
        <end position="285"/>
    </location>
</feature>
<feature type="region of interest" description="Disordered" evidence="5">
    <location>
        <begin position="240"/>
        <end position="285"/>
    </location>
</feature>
<feature type="short sequence motif" description="DEF box">
    <location>
        <begin position="95"/>
        <end position="129"/>
    </location>
</feature>
<feature type="compositionally biased region" description="Polar residues" evidence="5">
    <location>
        <begin position="241"/>
        <end position="259"/>
    </location>
</feature>
<feature type="compositionally biased region" description="Basic and acidic residues" evidence="5">
    <location>
        <begin position="260"/>
        <end position="272"/>
    </location>
</feature>
<feature type="cross-link" description="Glycyl lysine isopeptide (Lys-Gly) (interchain with G-Cter in SUMO2)" evidence="3">
    <location>
        <position position="9"/>
    </location>
</feature>
<proteinExistence type="evidence at transcript level"/>
<reference key="1">
    <citation type="submission" date="2006-09" db="EMBL/GenBank/DDBJ databases">
        <authorList>
            <consortium name="NIH - Mammalian Gene Collection (MGC) project"/>
        </authorList>
    </citation>
    <scope>NUCLEOTIDE SEQUENCE [LARGE SCALE MRNA]</scope>
    <source>
        <strain>Hereford</strain>
        <tissue>Fetal skin</tissue>
    </source>
</reference>
<dbReference type="EMBL" id="BC123506">
    <property type="protein sequence ID" value="AAI23507.1"/>
    <property type="molecule type" value="mRNA"/>
</dbReference>
<dbReference type="RefSeq" id="NP_001070316.1">
    <property type="nucleotide sequence ID" value="NM_001076848.1"/>
</dbReference>
<dbReference type="SMR" id="Q08DY6"/>
<dbReference type="FunCoup" id="Q08DY6">
    <property type="interactions" value="967"/>
</dbReference>
<dbReference type="STRING" id="9913.ENSBTAP00000028703"/>
<dbReference type="PaxDb" id="9913-ENSBTAP00000028703"/>
<dbReference type="GeneID" id="514085"/>
<dbReference type="KEGG" id="bta:514085"/>
<dbReference type="CTD" id="1876"/>
<dbReference type="VEuPathDB" id="HostDB:ENSBTAG00000048286"/>
<dbReference type="eggNOG" id="KOG2577">
    <property type="taxonomic scope" value="Eukaryota"/>
</dbReference>
<dbReference type="HOGENOM" id="CLU_032091_4_0_1"/>
<dbReference type="InParanoid" id="Q08DY6"/>
<dbReference type="OMA" id="XPSKIRI"/>
<dbReference type="OrthoDB" id="1743261at2759"/>
<dbReference type="TreeFam" id="TF105566"/>
<dbReference type="Reactome" id="R-BTA-8953750">
    <property type="pathway name" value="Transcriptional Regulation by E2F6"/>
</dbReference>
<dbReference type="Proteomes" id="UP000009136">
    <property type="component" value="Chromosome 11"/>
</dbReference>
<dbReference type="Bgee" id="ENSBTAG00000048286">
    <property type="expression patterns" value="Expressed in biceps femoris and 103 other cell types or tissues"/>
</dbReference>
<dbReference type="GO" id="GO:0071339">
    <property type="term" value="C:MLL1 complex"/>
    <property type="evidence" value="ECO:0000250"/>
    <property type="project" value="UniProtKB"/>
</dbReference>
<dbReference type="GO" id="GO:0090575">
    <property type="term" value="C:RNA polymerase II transcription regulator complex"/>
    <property type="evidence" value="ECO:0000318"/>
    <property type="project" value="GO_Central"/>
</dbReference>
<dbReference type="GO" id="GO:0000981">
    <property type="term" value="F:DNA-binding transcription factor activity, RNA polymerase II-specific"/>
    <property type="evidence" value="ECO:0000318"/>
    <property type="project" value="GO_Central"/>
</dbReference>
<dbReference type="GO" id="GO:0001227">
    <property type="term" value="F:DNA-binding transcription repressor activity, RNA polymerase II-specific"/>
    <property type="evidence" value="ECO:0000250"/>
    <property type="project" value="UniProtKB"/>
</dbReference>
<dbReference type="GO" id="GO:0046983">
    <property type="term" value="F:protein dimerization activity"/>
    <property type="evidence" value="ECO:0007669"/>
    <property type="project" value="InterPro"/>
</dbReference>
<dbReference type="GO" id="GO:0000978">
    <property type="term" value="F:RNA polymerase II cis-regulatory region sequence-specific DNA binding"/>
    <property type="evidence" value="ECO:0000318"/>
    <property type="project" value="GO_Central"/>
</dbReference>
<dbReference type="GO" id="GO:0043565">
    <property type="term" value="F:sequence-specific DNA binding"/>
    <property type="evidence" value="ECO:0000250"/>
    <property type="project" value="UniProtKB"/>
</dbReference>
<dbReference type="GO" id="GO:0006357">
    <property type="term" value="P:regulation of transcription by RNA polymerase II"/>
    <property type="evidence" value="ECO:0000318"/>
    <property type="project" value="GO_Central"/>
</dbReference>
<dbReference type="CDD" id="cd14660">
    <property type="entry name" value="E2F_DD"/>
    <property type="match status" value="1"/>
</dbReference>
<dbReference type="FunFam" id="1.10.10.10:FF:000008">
    <property type="entry name" value="E2F transcription factor 1"/>
    <property type="match status" value="1"/>
</dbReference>
<dbReference type="Gene3D" id="6.10.250.540">
    <property type="match status" value="1"/>
</dbReference>
<dbReference type="Gene3D" id="1.10.10.10">
    <property type="entry name" value="Winged helix-like DNA-binding domain superfamily/Winged helix DNA-binding domain"/>
    <property type="match status" value="1"/>
</dbReference>
<dbReference type="InterPro" id="IPR015633">
    <property type="entry name" value="E2F"/>
</dbReference>
<dbReference type="InterPro" id="IPR037241">
    <property type="entry name" value="E2F-DP_heterodim"/>
</dbReference>
<dbReference type="InterPro" id="IPR032198">
    <property type="entry name" value="E2F_CC-MB"/>
</dbReference>
<dbReference type="InterPro" id="IPR003316">
    <property type="entry name" value="E2F_WHTH_DNA-bd_dom"/>
</dbReference>
<dbReference type="InterPro" id="IPR036388">
    <property type="entry name" value="WH-like_DNA-bd_sf"/>
</dbReference>
<dbReference type="InterPro" id="IPR036390">
    <property type="entry name" value="WH_DNA-bd_sf"/>
</dbReference>
<dbReference type="PANTHER" id="PTHR12081">
    <property type="entry name" value="TRANSCRIPTION FACTOR E2F"/>
    <property type="match status" value="1"/>
</dbReference>
<dbReference type="PANTHER" id="PTHR12081:SF19">
    <property type="entry name" value="TRANSCRIPTION FACTOR E2F6"/>
    <property type="match status" value="1"/>
</dbReference>
<dbReference type="Pfam" id="PF16421">
    <property type="entry name" value="E2F_CC-MB"/>
    <property type="match status" value="1"/>
</dbReference>
<dbReference type="Pfam" id="PF02319">
    <property type="entry name" value="E2F_TDP"/>
    <property type="match status" value="1"/>
</dbReference>
<dbReference type="SMART" id="SM01372">
    <property type="entry name" value="E2F_TDP"/>
    <property type="match status" value="1"/>
</dbReference>
<dbReference type="SUPFAM" id="SSF144074">
    <property type="entry name" value="E2F-DP heterodimerization region"/>
    <property type="match status" value="1"/>
</dbReference>
<dbReference type="SUPFAM" id="SSF46785">
    <property type="entry name" value="Winged helix' DNA-binding domain"/>
    <property type="match status" value="1"/>
</dbReference>
<protein>
    <recommendedName>
        <fullName evidence="6">Transcription factor E2F6</fullName>
        <shortName evidence="2">E2F-6</shortName>
    </recommendedName>
</protein>
<keyword id="KW-0131">Cell cycle</keyword>
<keyword id="KW-0238">DNA-binding</keyword>
<keyword id="KW-1017">Isopeptide bond</keyword>
<keyword id="KW-0539">Nucleus</keyword>
<keyword id="KW-1185">Reference proteome</keyword>
<keyword id="KW-0678">Repressor</keyword>
<keyword id="KW-0804">Transcription</keyword>
<keyword id="KW-0805">Transcription regulation</keyword>
<keyword id="KW-0832">Ubl conjugation</keyword>
<accession>Q08DY6</accession>
<organism>
    <name type="scientific">Bos taurus</name>
    <name type="common">Bovine</name>
    <dbReference type="NCBI Taxonomy" id="9913"/>
    <lineage>
        <taxon>Eukaryota</taxon>
        <taxon>Metazoa</taxon>
        <taxon>Chordata</taxon>
        <taxon>Craniata</taxon>
        <taxon>Vertebrata</taxon>
        <taxon>Euteleostomi</taxon>
        <taxon>Mammalia</taxon>
        <taxon>Eutheria</taxon>
        <taxon>Laurasiatheria</taxon>
        <taxon>Artiodactyla</taxon>
        <taxon>Ruminantia</taxon>
        <taxon>Pecora</taxon>
        <taxon>Bovidae</taxon>
        <taxon>Bovinae</taxon>
        <taxon>Bos</taxon>
    </lineage>
</organism>
<gene>
    <name evidence="2" type="primary">E2F6</name>
</gene>
<evidence type="ECO:0000250" key="1"/>
<evidence type="ECO:0000250" key="2">
    <source>
        <dbReference type="UniProtKB" id="O54917"/>
    </source>
</evidence>
<evidence type="ECO:0000250" key="3">
    <source>
        <dbReference type="UniProtKB" id="O75461"/>
    </source>
</evidence>
<evidence type="ECO:0000255" key="4"/>
<evidence type="ECO:0000256" key="5">
    <source>
        <dbReference type="SAM" id="MobiDB-lite"/>
    </source>
</evidence>
<evidence type="ECO:0000305" key="6"/>
<sequence>MSQQRPARKLPSLLVDPAEETVRRRCRDPINVEGLLPSKIRINLEDNVQYVSMRKALKVKRPRFDVSLVYLTRKFMDLVRSAPGGILDLNKVATKLGVRKRRVYDITNVLDGIDLVEKKSKNHIRWIGSDLSNFGAVPQQKKLQEELSDLSAMEDALDELIKDCAQQLFELTDDKENERLAYVTYQDIHSIQAFHEQIVIAVKAPAETRLDVPAPKEDSITVHIRSTKGPIDVYLCEVEQGSHSSNKTSDNVGTSSSKSKPLEHPQPEKEENPPQQSEEVLEVSN</sequence>
<name>E2F6_BOVIN</name>
<comment type="function">
    <text evidence="2 3">Inhibitor of E2F-dependent transcription. Binds DNA cooperatively with DP proteins through the E2 recognition site, 5'-TTTC[CG]CGC-3'. Has a preference for the 5'-TTTCCCGC-3' E2F recognition site. E2F6 lacks the transcriptional activation and pocket protein binding domains (By similarity). Appears to regulate a subset of E2F-dependent genes whose products are required for entry into the cell cycle but not for normal cell cycle progression (By similarity). Represses expression of some meiosis-specific genes, including SLC25A31/ANT4 (By similarity). May silence expression via the recruitment of a chromatin remodeling complex containing histone H3-K9 methyltransferase activity. Overexpression delays the exit of cells from the S-phase (By similarity).</text>
</comment>
<comment type="subunit">
    <text evidence="3">Forms heterodimers with DP family members TFDP1 or TFDP2. Component of the DRTF1/E2F transcription factor complex. Part of the E2F6.com-1 complex in G0 phase composed of E2F6, MGA, MAX, TFDP1, CBX3, BAT8, EUHMTASE1, RING1, RNF2, MBLR, L3MBTL2 and YAF2. Component of some MLL1/MLL complex, at least composed of the core components KMT2A/MLL1, ASH2L, HCFC1/HCF1, WDR5 and RBBP5, as well as the facultative components BACC1, CHD8, E2F6, HSP70, INO80C, KANSL1, LAS1L, MAX, MCRS1, MGA, KAT8/MOF, PELP1, PHF20, PRP31, RING2, RUVB1/TIP49A, RUVB2/TIP49B, SENP3, TAF1, TAF4, TAF6, TAF7, TAF9 and TEX10.</text>
</comment>
<comment type="subcellular location">
    <subcellularLocation>
        <location evidence="3">Nucleus</location>
    </subcellularLocation>
</comment>
<comment type="similarity">
    <text evidence="6">Belongs to the E2F/DP family.</text>
</comment>